<keyword id="KW-0648">Protein biosynthesis</keyword>
<keyword id="KW-1185">Reference proteome</keyword>
<keyword id="KW-0808">Transferase</keyword>
<feature type="chain" id="PRO_0000082919" description="Methionyl-tRNA formyltransferase">
    <location>
        <begin position="1"/>
        <end position="322"/>
    </location>
</feature>
<feature type="binding site" evidence="1">
    <location>
        <begin position="113"/>
        <end position="116"/>
    </location>
    <ligand>
        <name>(6S)-5,6,7,8-tetrahydrofolate</name>
        <dbReference type="ChEBI" id="CHEBI:57453"/>
    </ligand>
</feature>
<gene>
    <name evidence="1" type="primary">fmt</name>
    <name type="ordered locus">BT_3945</name>
</gene>
<proteinExistence type="inferred from homology"/>
<protein>
    <recommendedName>
        <fullName evidence="1">Methionyl-tRNA formyltransferase</fullName>
        <ecNumber evidence="1">2.1.2.9</ecNumber>
    </recommendedName>
</protein>
<organism>
    <name type="scientific">Bacteroides thetaiotaomicron (strain ATCC 29148 / DSM 2079 / JCM 5827 / CCUG 10774 / NCTC 10582 / VPI-5482 / E50)</name>
    <dbReference type="NCBI Taxonomy" id="226186"/>
    <lineage>
        <taxon>Bacteria</taxon>
        <taxon>Pseudomonadati</taxon>
        <taxon>Bacteroidota</taxon>
        <taxon>Bacteroidia</taxon>
        <taxon>Bacteroidales</taxon>
        <taxon>Bacteroidaceae</taxon>
        <taxon>Bacteroides</taxon>
    </lineage>
</organism>
<sequence>MKKEDLRIVYMGTPDFAVEALRQLVEGGYNVVGVITMPDKPAGRGHKIQYSPVKQYALEQNLPLLQPEKLKDEAFVQALREWKADLQIVVAFRMLPEVVWNMPRLGTFNLHASLLPQYRGAAPINWAVINGDTETGITTFFLQHEIDTGKVIQQVRVPIADTDNVEVVHDKLMILGGKLVLETVDAILNDTVKPIAQEDMAVVGELRPAPKIFKETCRIDWNSPVKKVYDFIRGLSPYPAAWSELVSPEGEAVVMKIFESEKIYEAHQLPVGTVVTDGKKYIKVAVPDGFVSVLSLQLPGKKRLKTDELLRGFRLSDGYKMN</sequence>
<accession>Q8A0S6</accession>
<dbReference type="EC" id="2.1.2.9" evidence="1"/>
<dbReference type="EMBL" id="AE015928">
    <property type="protein sequence ID" value="AAO79050.1"/>
    <property type="molecule type" value="Genomic_DNA"/>
</dbReference>
<dbReference type="RefSeq" id="NP_812856.1">
    <property type="nucleotide sequence ID" value="NC_004663.1"/>
</dbReference>
<dbReference type="RefSeq" id="WP_011109030.1">
    <property type="nucleotide sequence ID" value="NC_004663.1"/>
</dbReference>
<dbReference type="SMR" id="Q8A0S6"/>
<dbReference type="FunCoup" id="Q8A0S6">
    <property type="interactions" value="500"/>
</dbReference>
<dbReference type="STRING" id="226186.BT_3945"/>
<dbReference type="PaxDb" id="226186-BT_3945"/>
<dbReference type="EnsemblBacteria" id="AAO79050">
    <property type="protein sequence ID" value="AAO79050"/>
    <property type="gene ID" value="BT_3945"/>
</dbReference>
<dbReference type="GeneID" id="60925117"/>
<dbReference type="KEGG" id="bth:BT_3945"/>
<dbReference type="PATRIC" id="fig|226186.12.peg.4010"/>
<dbReference type="eggNOG" id="COG0223">
    <property type="taxonomic scope" value="Bacteria"/>
</dbReference>
<dbReference type="HOGENOM" id="CLU_033347_1_1_10"/>
<dbReference type="InParanoid" id="Q8A0S6"/>
<dbReference type="OrthoDB" id="9802815at2"/>
<dbReference type="Proteomes" id="UP000001414">
    <property type="component" value="Chromosome"/>
</dbReference>
<dbReference type="GO" id="GO:0005829">
    <property type="term" value="C:cytosol"/>
    <property type="evidence" value="ECO:0000318"/>
    <property type="project" value="GO_Central"/>
</dbReference>
<dbReference type="GO" id="GO:0004479">
    <property type="term" value="F:methionyl-tRNA formyltransferase activity"/>
    <property type="evidence" value="ECO:0000318"/>
    <property type="project" value="GO_Central"/>
</dbReference>
<dbReference type="GO" id="GO:0071951">
    <property type="term" value="P:conversion of methionyl-tRNA to N-formyl-methionyl-tRNA"/>
    <property type="evidence" value="ECO:0000318"/>
    <property type="project" value="GO_Central"/>
</dbReference>
<dbReference type="CDD" id="cd08646">
    <property type="entry name" value="FMT_core_Met-tRNA-FMT_N"/>
    <property type="match status" value="1"/>
</dbReference>
<dbReference type="CDD" id="cd08704">
    <property type="entry name" value="Met_tRNA_FMT_C"/>
    <property type="match status" value="1"/>
</dbReference>
<dbReference type="FunFam" id="3.40.50.170:FF:000020">
    <property type="entry name" value="Methionyl-tRNA formyltransferase"/>
    <property type="match status" value="1"/>
</dbReference>
<dbReference type="Gene3D" id="3.10.25.10">
    <property type="entry name" value="Formyl transferase, C-terminal domain"/>
    <property type="match status" value="1"/>
</dbReference>
<dbReference type="Gene3D" id="3.40.50.170">
    <property type="entry name" value="Formyl transferase, N-terminal domain"/>
    <property type="match status" value="1"/>
</dbReference>
<dbReference type="HAMAP" id="MF_00182">
    <property type="entry name" value="Formyl_trans"/>
    <property type="match status" value="1"/>
</dbReference>
<dbReference type="InterPro" id="IPR005794">
    <property type="entry name" value="Fmt"/>
</dbReference>
<dbReference type="InterPro" id="IPR005793">
    <property type="entry name" value="Formyl_trans_C"/>
</dbReference>
<dbReference type="InterPro" id="IPR037022">
    <property type="entry name" value="Formyl_trans_C_sf"/>
</dbReference>
<dbReference type="InterPro" id="IPR002376">
    <property type="entry name" value="Formyl_transf_N"/>
</dbReference>
<dbReference type="InterPro" id="IPR036477">
    <property type="entry name" value="Formyl_transf_N_sf"/>
</dbReference>
<dbReference type="InterPro" id="IPR011034">
    <property type="entry name" value="Formyl_transferase-like_C_sf"/>
</dbReference>
<dbReference type="InterPro" id="IPR044135">
    <property type="entry name" value="Met-tRNA-FMT_C"/>
</dbReference>
<dbReference type="InterPro" id="IPR041711">
    <property type="entry name" value="Met-tRNA-FMT_N"/>
</dbReference>
<dbReference type="NCBIfam" id="TIGR00460">
    <property type="entry name" value="fmt"/>
    <property type="match status" value="1"/>
</dbReference>
<dbReference type="PANTHER" id="PTHR11138">
    <property type="entry name" value="METHIONYL-TRNA FORMYLTRANSFERASE"/>
    <property type="match status" value="1"/>
</dbReference>
<dbReference type="PANTHER" id="PTHR11138:SF5">
    <property type="entry name" value="METHIONYL-TRNA FORMYLTRANSFERASE, MITOCHONDRIAL"/>
    <property type="match status" value="1"/>
</dbReference>
<dbReference type="Pfam" id="PF02911">
    <property type="entry name" value="Formyl_trans_C"/>
    <property type="match status" value="1"/>
</dbReference>
<dbReference type="Pfam" id="PF00551">
    <property type="entry name" value="Formyl_trans_N"/>
    <property type="match status" value="1"/>
</dbReference>
<dbReference type="SUPFAM" id="SSF50486">
    <property type="entry name" value="FMT C-terminal domain-like"/>
    <property type="match status" value="1"/>
</dbReference>
<dbReference type="SUPFAM" id="SSF53328">
    <property type="entry name" value="Formyltransferase"/>
    <property type="match status" value="1"/>
</dbReference>
<name>FMT_BACTN</name>
<evidence type="ECO:0000255" key="1">
    <source>
        <dbReference type="HAMAP-Rule" id="MF_00182"/>
    </source>
</evidence>
<reference key="1">
    <citation type="journal article" date="2003" name="Science">
        <title>A genomic view of the human-Bacteroides thetaiotaomicron symbiosis.</title>
        <authorList>
            <person name="Xu J."/>
            <person name="Bjursell M.K."/>
            <person name="Himrod J."/>
            <person name="Deng S."/>
            <person name="Carmichael L.K."/>
            <person name="Chiang H.C."/>
            <person name="Hooper L.V."/>
            <person name="Gordon J.I."/>
        </authorList>
    </citation>
    <scope>NUCLEOTIDE SEQUENCE [LARGE SCALE GENOMIC DNA]</scope>
    <source>
        <strain>ATCC 29148 / DSM 2079 / JCM 5827 / CCUG 10774 / NCTC 10582 / VPI-5482 / E50</strain>
    </source>
</reference>
<comment type="function">
    <text evidence="1">Attaches a formyl group to the free amino group of methionyl-tRNA(fMet). The formyl group appears to play a dual role in the initiator identity of N-formylmethionyl-tRNA by promoting its recognition by IF2 and preventing the misappropriation of this tRNA by the elongation apparatus.</text>
</comment>
<comment type="catalytic activity">
    <reaction evidence="1">
        <text>L-methionyl-tRNA(fMet) + (6R)-10-formyltetrahydrofolate = N-formyl-L-methionyl-tRNA(fMet) + (6S)-5,6,7,8-tetrahydrofolate + H(+)</text>
        <dbReference type="Rhea" id="RHEA:24380"/>
        <dbReference type="Rhea" id="RHEA-COMP:9952"/>
        <dbReference type="Rhea" id="RHEA-COMP:9953"/>
        <dbReference type="ChEBI" id="CHEBI:15378"/>
        <dbReference type="ChEBI" id="CHEBI:57453"/>
        <dbReference type="ChEBI" id="CHEBI:78530"/>
        <dbReference type="ChEBI" id="CHEBI:78844"/>
        <dbReference type="ChEBI" id="CHEBI:195366"/>
        <dbReference type="EC" id="2.1.2.9"/>
    </reaction>
</comment>
<comment type="similarity">
    <text evidence="1">Belongs to the Fmt family.</text>
</comment>